<name>AP3M1_PONAB</name>
<protein>
    <recommendedName>
        <fullName>AP-3 complex subunit mu-1</fullName>
    </recommendedName>
    <alternativeName>
        <fullName>AP-3 adaptor complex mu3A subunit</fullName>
    </alternativeName>
    <alternativeName>
        <fullName>Adaptor-related protein complex 3 subunit mu-1</fullName>
    </alternativeName>
    <alternativeName>
        <fullName>Mu-adaptin 3A</fullName>
    </alternativeName>
    <alternativeName>
        <fullName>Mu3A-adaptin</fullName>
    </alternativeName>
</protein>
<proteinExistence type="evidence at transcript level"/>
<sequence>MIHSLFLINCSGDIFLEKHWKSVVSQSVCDYFFEAQEKAADVENVPPVISTPHHYLISIYRDKLFFVSVIQTEVPPLFVIEFLHRVADTFQDYFGECSEAAIKDNVVIVYELLEEMLDNGFPLATESNILKELIKPPTILRSVVNSITGSSNVGDTLPTGQLSNIPWRRAGVKYTNNEAYFDVVEEIDAIIDKSGSTVFAEIQGVIDACIKLSGMPDLSLSFMNPRLLDDVSFHPCIRFKRWESERVLSFIPPDGNFRLISYRVSSQNLVAIPVYVKHSISFKENSSCGRFDITIGPKQNMGKTIEGITVTVHMPKVVLNMNLTPTQGSYTFDPVTKVLTWDVGKITPQKLPSLKGLVNLQSGAPKPEENPSLNIQFKIQQLAISGLKVNRLDMYGEKYKPFKGVKYVTKAGKFQVRT</sequence>
<keyword id="KW-0025">Alternative splicing</keyword>
<keyword id="KW-0968">Cytoplasmic vesicle</keyword>
<keyword id="KW-0333">Golgi apparatus</keyword>
<keyword id="KW-0472">Membrane</keyword>
<keyword id="KW-0653">Protein transport</keyword>
<keyword id="KW-1185">Reference proteome</keyword>
<keyword id="KW-0813">Transport</keyword>
<feature type="chain" id="PRO_0000285805" description="AP-3 complex subunit mu-1">
    <location>
        <begin position="1"/>
        <end position="418"/>
    </location>
</feature>
<feature type="domain" description="MHD" evidence="2">
    <location>
        <begin position="176"/>
        <end position="417"/>
    </location>
</feature>
<feature type="splice variant" id="VSP_024916" description="In isoform 2." evidence="3">
    <original>LTWDVGKITPQKLPSLKGLVNLQ</original>
    <variation>QPLQIKSTNMGCGKNYSTKAPKS</variation>
    <location>
        <begin position="339"/>
        <end position="361"/>
    </location>
</feature>
<feature type="splice variant" id="VSP_024917" description="In isoform 2." evidence="3">
    <location>
        <begin position="362"/>
        <end position="418"/>
    </location>
</feature>
<feature type="sequence conflict" description="In Ref. 1; CAH90960." evidence="4" ref="1">
    <original>I</original>
    <variation>T</variation>
    <location>
        <position position="108"/>
    </location>
</feature>
<feature type="sequence conflict" description="In Ref. 1; CAH90960." evidence="4" ref="1">
    <original>S</original>
    <variation>P</variation>
    <location>
        <position position="261"/>
    </location>
</feature>
<dbReference type="EMBL" id="CR858751">
    <property type="protein sequence ID" value="CAH90960.1"/>
    <property type="molecule type" value="mRNA"/>
</dbReference>
<dbReference type="EMBL" id="CR861379">
    <property type="protein sequence ID" value="CAH93438.1"/>
    <property type="molecule type" value="mRNA"/>
</dbReference>
<dbReference type="RefSeq" id="NP_001125552.1">
    <property type="nucleotide sequence ID" value="NM_001132080.1"/>
</dbReference>
<dbReference type="RefSeq" id="NP_001127013.1">
    <molecule id="Q5R478-1"/>
    <property type="nucleotide sequence ID" value="NM_001133541.2"/>
</dbReference>
<dbReference type="RefSeq" id="NP_001417293.1">
    <molecule id="Q5R478-1"/>
    <property type="nucleotide sequence ID" value="NM_001430364.1"/>
</dbReference>
<dbReference type="RefSeq" id="NP_001417294.1">
    <molecule id="Q5R478-1"/>
    <property type="nucleotide sequence ID" value="NM_001430365.1"/>
</dbReference>
<dbReference type="RefSeq" id="XP_009243726.1">
    <property type="nucleotide sequence ID" value="XM_009245451.1"/>
</dbReference>
<dbReference type="RefSeq" id="XP_009243727.1">
    <property type="nucleotide sequence ID" value="XM_009245452.1"/>
</dbReference>
<dbReference type="RefSeq" id="XP_024108897.2">
    <molecule id="Q5R478-1"/>
    <property type="nucleotide sequence ID" value="XM_024253129.3"/>
</dbReference>
<dbReference type="SMR" id="Q5R478"/>
<dbReference type="FunCoup" id="Q5R478">
    <property type="interactions" value="3055"/>
</dbReference>
<dbReference type="STRING" id="9601.ENSPPYP00000002697"/>
<dbReference type="Ensembl" id="ENSPPYT00000043470.1">
    <molecule id="Q5R478-2"/>
    <property type="protein sequence ID" value="ENSPPYP00000045734.1"/>
    <property type="gene ID" value="ENSPPYG00000002322.3"/>
</dbReference>
<dbReference type="GeneID" id="100174037"/>
<dbReference type="KEGG" id="pon:100174037"/>
<dbReference type="CTD" id="26985"/>
<dbReference type="eggNOG" id="KOG2740">
    <property type="taxonomic scope" value="Eukaryota"/>
</dbReference>
<dbReference type="GeneTree" id="ENSGT00940000158184"/>
<dbReference type="HOGENOM" id="CLU_026996_6_2_1"/>
<dbReference type="InParanoid" id="Q5R478"/>
<dbReference type="OrthoDB" id="870at2759"/>
<dbReference type="TreeFam" id="TF315187"/>
<dbReference type="Proteomes" id="UP000001595">
    <property type="component" value="Chromosome 10"/>
</dbReference>
<dbReference type="GO" id="GO:1904115">
    <property type="term" value="C:axon cytoplasm"/>
    <property type="evidence" value="ECO:0007669"/>
    <property type="project" value="GOC"/>
</dbReference>
<dbReference type="GO" id="GO:0030131">
    <property type="term" value="C:clathrin adaptor complex"/>
    <property type="evidence" value="ECO:0007669"/>
    <property type="project" value="InterPro"/>
</dbReference>
<dbReference type="GO" id="GO:0030659">
    <property type="term" value="C:cytoplasmic vesicle membrane"/>
    <property type="evidence" value="ECO:0007669"/>
    <property type="project" value="UniProtKB-SubCell"/>
</dbReference>
<dbReference type="GO" id="GO:0005794">
    <property type="term" value="C:Golgi apparatus"/>
    <property type="evidence" value="ECO:0007669"/>
    <property type="project" value="UniProtKB-SubCell"/>
</dbReference>
<dbReference type="GO" id="GO:0008089">
    <property type="term" value="P:anterograde axonal transport"/>
    <property type="evidence" value="ECO:0000250"/>
    <property type="project" value="UniProtKB"/>
</dbReference>
<dbReference type="GO" id="GO:0048490">
    <property type="term" value="P:anterograde synaptic vesicle transport"/>
    <property type="evidence" value="ECO:0000250"/>
    <property type="project" value="UniProtKB"/>
</dbReference>
<dbReference type="GO" id="GO:0006886">
    <property type="term" value="P:intracellular protein transport"/>
    <property type="evidence" value="ECO:0007669"/>
    <property type="project" value="InterPro"/>
</dbReference>
<dbReference type="GO" id="GO:0016192">
    <property type="term" value="P:vesicle-mediated transport"/>
    <property type="evidence" value="ECO:0007669"/>
    <property type="project" value="InterPro"/>
</dbReference>
<dbReference type="CDD" id="cd09260">
    <property type="entry name" value="AP-3_Mu3A_Cterm"/>
    <property type="match status" value="1"/>
</dbReference>
<dbReference type="CDD" id="cd14837">
    <property type="entry name" value="AP3_Mu_N"/>
    <property type="match status" value="1"/>
</dbReference>
<dbReference type="FunFam" id="3.30.450.60:FF:000012">
    <property type="entry name" value="AP-3 complex subunit mu-1 isoform X1"/>
    <property type="match status" value="1"/>
</dbReference>
<dbReference type="FunFam" id="2.60.40.1170:FF:000006">
    <property type="entry name" value="Putative AP-3 complex subunit mu-2-like"/>
    <property type="match status" value="1"/>
</dbReference>
<dbReference type="Gene3D" id="3.30.450.60">
    <property type="match status" value="1"/>
</dbReference>
<dbReference type="Gene3D" id="2.60.40.1170">
    <property type="entry name" value="Mu homology domain, subdomain B"/>
    <property type="match status" value="2"/>
</dbReference>
<dbReference type="InterPro" id="IPR050431">
    <property type="entry name" value="Adaptor_comp_med_subunit"/>
</dbReference>
<dbReference type="InterPro" id="IPR036168">
    <property type="entry name" value="AP2_Mu_C_sf"/>
</dbReference>
<dbReference type="InterPro" id="IPR022775">
    <property type="entry name" value="AP_mu_sigma_su"/>
</dbReference>
<dbReference type="InterPro" id="IPR001392">
    <property type="entry name" value="Clathrin_mu"/>
</dbReference>
<dbReference type="InterPro" id="IPR018240">
    <property type="entry name" value="Clathrin_mu_CS"/>
</dbReference>
<dbReference type="InterPro" id="IPR011012">
    <property type="entry name" value="Longin-like_dom_sf"/>
</dbReference>
<dbReference type="InterPro" id="IPR028565">
    <property type="entry name" value="MHD"/>
</dbReference>
<dbReference type="PANTHER" id="PTHR10529">
    <property type="entry name" value="AP COMPLEX SUBUNIT MU"/>
    <property type="match status" value="1"/>
</dbReference>
<dbReference type="Pfam" id="PF00928">
    <property type="entry name" value="Adap_comp_sub"/>
    <property type="match status" value="1"/>
</dbReference>
<dbReference type="Pfam" id="PF01217">
    <property type="entry name" value="Clat_adaptor_s"/>
    <property type="match status" value="1"/>
</dbReference>
<dbReference type="PIRSF" id="PIRSF005992">
    <property type="entry name" value="Clathrin_mu"/>
    <property type="match status" value="1"/>
</dbReference>
<dbReference type="PRINTS" id="PR00314">
    <property type="entry name" value="CLATHRINADPT"/>
</dbReference>
<dbReference type="SUPFAM" id="SSF49447">
    <property type="entry name" value="Second domain of Mu2 adaptin subunit (ap50) of ap2 adaptor"/>
    <property type="match status" value="1"/>
</dbReference>
<dbReference type="SUPFAM" id="SSF64356">
    <property type="entry name" value="SNARE-like"/>
    <property type="match status" value="1"/>
</dbReference>
<dbReference type="PROSITE" id="PS00990">
    <property type="entry name" value="CLAT_ADAPTOR_M_1"/>
    <property type="match status" value="1"/>
</dbReference>
<dbReference type="PROSITE" id="PS00991">
    <property type="entry name" value="CLAT_ADAPTOR_M_2"/>
    <property type="match status" value="1"/>
</dbReference>
<dbReference type="PROSITE" id="PS51072">
    <property type="entry name" value="MHD"/>
    <property type="match status" value="1"/>
</dbReference>
<gene>
    <name type="primary">AP3M1</name>
</gene>
<comment type="function">
    <text evidence="1">Part of the AP-3 complex, an adaptor-related complex which is not clathrin-associated. The complex is associated with the Golgi region as well as more peripheral structures. It facilitates the budding of vesicles from the Golgi membrane and may be directly involved in trafficking to lysosomes. In concert with the BLOC-1 complex, AP-3 is required to target cargos into vesicles assembled at cell bodies for delivery into neurites and nerve terminals (By similarity).</text>
</comment>
<comment type="subunit">
    <text evidence="1">Adaptor protein complex 3 (AP-3) is a heterotetramer composed of two large adaptins (delta-type subunit AP3D1 and beta-type subunit AP3B1 or AP3B2), a medium adaptin (mu-type subunit AP3M1 or AP3M2) and a small adaptin (sigma-type subunit APS1 or AP3S2). Interacts with AGAP1. AP-3 associates with the BLOC-1 complex (By similarity).</text>
</comment>
<comment type="subcellular location">
    <subcellularLocation>
        <location evidence="1">Golgi apparatus</location>
    </subcellularLocation>
    <subcellularLocation>
        <location evidence="1">Cytoplasmic vesicle membrane</location>
        <topology evidence="1">Peripheral membrane protein</topology>
        <orientation evidence="1">Cytoplasmic side</orientation>
    </subcellularLocation>
    <text evidence="1">Component of the coat surrounding the cytoplasmic face of coated vesicles located at the Golgi complex.</text>
</comment>
<comment type="alternative products">
    <event type="alternative splicing"/>
    <isoform>
        <id>Q5R478-1</id>
        <name>1</name>
        <sequence type="displayed"/>
    </isoform>
    <isoform>
        <id>Q5R478-2</id>
        <name>2</name>
        <sequence type="described" ref="VSP_024916 VSP_024917"/>
    </isoform>
</comment>
<comment type="similarity">
    <text evidence="4">Belongs to the adaptor complexes medium subunit family.</text>
</comment>
<accession>Q5R478</accession>
<accession>Q5RBA0</accession>
<evidence type="ECO:0000250" key="1"/>
<evidence type="ECO:0000255" key="2">
    <source>
        <dbReference type="PROSITE-ProRule" id="PRU00404"/>
    </source>
</evidence>
<evidence type="ECO:0000303" key="3">
    <source ref="1"/>
</evidence>
<evidence type="ECO:0000305" key="4"/>
<organism>
    <name type="scientific">Pongo abelii</name>
    <name type="common">Sumatran orangutan</name>
    <name type="synonym">Pongo pygmaeus abelii</name>
    <dbReference type="NCBI Taxonomy" id="9601"/>
    <lineage>
        <taxon>Eukaryota</taxon>
        <taxon>Metazoa</taxon>
        <taxon>Chordata</taxon>
        <taxon>Craniata</taxon>
        <taxon>Vertebrata</taxon>
        <taxon>Euteleostomi</taxon>
        <taxon>Mammalia</taxon>
        <taxon>Eutheria</taxon>
        <taxon>Euarchontoglires</taxon>
        <taxon>Primates</taxon>
        <taxon>Haplorrhini</taxon>
        <taxon>Catarrhini</taxon>
        <taxon>Hominidae</taxon>
        <taxon>Pongo</taxon>
    </lineage>
</organism>
<reference key="1">
    <citation type="submission" date="2004-11" db="EMBL/GenBank/DDBJ databases">
        <authorList>
            <consortium name="The German cDNA consortium"/>
        </authorList>
    </citation>
    <scope>NUCLEOTIDE SEQUENCE [LARGE SCALE MRNA] (ISOFORMS 1 AND 2)</scope>
    <source>
        <tissue>Brain cortex</tissue>
    </source>
</reference>